<protein>
    <recommendedName>
        <fullName evidence="1">Mercuric transport protein periplasmic component</fullName>
    </recommendedName>
    <alternativeName>
        <fullName evidence="1">Mercury scavenger protein</fullName>
    </alternativeName>
    <alternativeName>
        <fullName evidence="1">Periplasmic mercury ion-binding protein</fullName>
    </alternativeName>
</protein>
<proteinExistence type="inferred from homology"/>
<geneLocation type="plasmid">
    <name>pKLH2</name>
</geneLocation>
<dbReference type="EMBL" id="AF213017">
    <property type="protein sequence ID" value="AAA19680.1"/>
    <property type="molecule type" value="Genomic_DNA"/>
</dbReference>
<dbReference type="RefSeq" id="WP_004178136.1">
    <property type="nucleotide sequence ID" value="NZ_MOSW01000200.1"/>
</dbReference>
<dbReference type="SMR" id="Q52107"/>
<dbReference type="GeneID" id="92893129"/>
<dbReference type="GO" id="GO:0042597">
    <property type="term" value="C:periplasmic space"/>
    <property type="evidence" value="ECO:0007669"/>
    <property type="project" value="UniProtKB-SubCell"/>
</dbReference>
<dbReference type="GO" id="GO:0045340">
    <property type="term" value="F:mercury ion binding"/>
    <property type="evidence" value="ECO:0007669"/>
    <property type="project" value="InterPro"/>
</dbReference>
<dbReference type="GO" id="GO:0015097">
    <property type="term" value="F:mercury ion transmembrane transporter activity"/>
    <property type="evidence" value="ECO:0007669"/>
    <property type="project" value="InterPro"/>
</dbReference>
<dbReference type="CDD" id="cd00371">
    <property type="entry name" value="HMA"/>
    <property type="match status" value="1"/>
</dbReference>
<dbReference type="FunFam" id="3.30.70.100:FF:000005">
    <property type="entry name" value="Copper-exporting P-type ATPase A"/>
    <property type="match status" value="1"/>
</dbReference>
<dbReference type="Gene3D" id="3.30.70.100">
    <property type="match status" value="1"/>
</dbReference>
<dbReference type="InterPro" id="IPR017969">
    <property type="entry name" value="Heavy-metal-associated_CS"/>
</dbReference>
<dbReference type="InterPro" id="IPR006121">
    <property type="entry name" value="HMA_dom"/>
</dbReference>
<dbReference type="InterPro" id="IPR036163">
    <property type="entry name" value="HMA_dom_sf"/>
</dbReference>
<dbReference type="InterPro" id="IPR011795">
    <property type="entry name" value="MerP"/>
</dbReference>
<dbReference type="InterPro" id="IPR001802">
    <property type="entry name" value="MerP/CopZ"/>
</dbReference>
<dbReference type="NCBIfam" id="TIGR02052">
    <property type="entry name" value="MerP"/>
    <property type="match status" value="1"/>
</dbReference>
<dbReference type="PANTHER" id="PTHR46594">
    <property type="entry name" value="P-TYPE CATION-TRANSPORTING ATPASE"/>
    <property type="match status" value="1"/>
</dbReference>
<dbReference type="PANTHER" id="PTHR46594:SF4">
    <property type="entry name" value="P-TYPE CATION-TRANSPORTING ATPASE"/>
    <property type="match status" value="1"/>
</dbReference>
<dbReference type="Pfam" id="PF00403">
    <property type="entry name" value="HMA"/>
    <property type="match status" value="1"/>
</dbReference>
<dbReference type="PRINTS" id="PR00946">
    <property type="entry name" value="HGSCAVENGER"/>
</dbReference>
<dbReference type="SUPFAM" id="SSF55008">
    <property type="entry name" value="HMA, heavy metal-associated domain"/>
    <property type="match status" value="1"/>
</dbReference>
<dbReference type="PROSITE" id="PS01047">
    <property type="entry name" value="HMA_1"/>
    <property type="match status" value="1"/>
</dbReference>
<dbReference type="PROSITE" id="PS50846">
    <property type="entry name" value="HMA_2"/>
    <property type="match status" value="1"/>
</dbReference>
<accession>Q52107</accession>
<keyword id="KW-0475">Mercuric resistance</keyword>
<keyword id="KW-0476">Mercury</keyword>
<keyword id="KW-0479">Metal-binding</keyword>
<keyword id="KW-0574">Periplasm</keyword>
<keyword id="KW-0614">Plasmid</keyword>
<keyword id="KW-0732">Signal</keyword>
<reference key="1">
    <citation type="journal article" date="1993" name="Plasmid">
        <title>Molecular characterization of an aberrant mercury resistance transposable element from an environmental Acinetobacter strain.</title>
        <authorList>
            <person name="Kholodii G.Y."/>
            <person name="Lomovskaya O.L."/>
            <person name="Gorlenko Z.M."/>
            <person name="Mindlin S.Z."/>
            <person name="Yurieva O.V."/>
            <person name="Nikiforov V.G."/>
        </authorList>
    </citation>
    <scope>NUCLEOTIDE SEQUENCE [GENOMIC DNA]</scope>
</reference>
<sequence length="91" mass="9636">MKKLFASLALAAFVAPVFAATQTVTLSVPGMTCASCPITVKHALSKVEGVSKTDVSFDKRQAVVTFDDAKTNVQKLTKATEDAGYPSSLKR</sequence>
<name>MERP_ACICA</name>
<evidence type="ECO:0000250" key="1">
    <source>
        <dbReference type="UniProtKB" id="P04129"/>
    </source>
</evidence>
<evidence type="ECO:0000250" key="2">
    <source>
        <dbReference type="UniProtKB" id="P13113"/>
    </source>
</evidence>
<evidence type="ECO:0000255" key="3"/>
<evidence type="ECO:0000255" key="4">
    <source>
        <dbReference type="PROSITE-ProRule" id="PRU00280"/>
    </source>
</evidence>
<evidence type="ECO:0000303" key="5">
    <source>
    </source>
</evidence>
<evidence type="ECO:0000305" key="6"/>
<feature type="signal peptide" evidence="3">
    <location>
        <begin position="1"/>
        <end position="19"/>
    </location>
</feature>
<feature type="chain" id="PRO_0000021670" description="Mercuric transport protein periplasmic component">
    <location>
        <begin position="20"/>
        <end position="91"/>
    </location>
</feature>
<feature type="domain" description="HMA" evidence="4">
    <location>
        <begin position="22"/>
        <end position="88"/>
    </location>
</feature>
<feature type="binding site" evidence="4">
    <location>
        <position position="33"/>
    </location>
    <ligand>
        <name>Hg(2+)</name>
        <dbReference type="ChEBI" id="CHEBI:16793"/>
    </ligand>
</feature>
<feature type="binding site" evidence="4">
    <location>
        <position position="36"/>
    </location>
    <ligand>
        <name>Hg(2+)</name>
        <dbReference type="ChEBI" id="CHEBI:16793"/>
    </ligand>
</feature>
<gene>
    <name evidence="5" type="primary">merP</name>
</gene>
<organism>
    <name type="scientific">Acinetobacter calcoaceticus</name>
    <dbReference type="NCBI Taxonomy" id="471"/>
    <lineage>
        <taxon>Bacteria</taxon>
        <taxon>Pseudomonadati</taxon>
        <taxon>Pseudomonadota</taxon>
        <taxon>Gammaproteobacteria</taxon>
        <taxon>Moraxellales</taxon>
        <taxon>Moraxellaceae</taxon>
        <taxon>Acinetobacter</taxon>
        <taxon>Acinetobacter calcoaceticus/baumannii complex</taxon>
    </lineage>
</organism>
<comment type="function">
    <text evidence="1">Involved in mercury resistance. Acts as a mercury scavenger that specifically binds to a mercuric ion in the periplasm and probably passes it to the cytoplasmic mercuric reductase MerA via the mercuric transport protein MerT.</text>
</comment>
<comment type="subunit">
    <text evidence="2">Monomer.</text>
</comment>
<comment type="subcellular location">
    <subcellularLocation>
        <location evidence="2">Periplasm</location>
    </subcellularLocation>
</comment>
<comment type="similarity">
    <text evidence="6">Belongs to the MerP family.</text>
</comment>